<gene>
    <name type="primary">Arhgef39</name>
</gene>
<accession>Q66JY6</accession>
<accession>A2AIN0</accession>
<accession>Q3TQV6</accession>
<name>ARG39_MOUSE</name>
<reference key="1">
    <citation type="journal article" date="2005" name="Science">
        <title>The transcriptional landscape of the mammalian genome.</title>
        <authorList>
            <person name="Carninci P."/>
            <person name="Kasukawa T."/>
            <person name="Katayama S."/>
            <person name="Gough J."/>
            <person name="Frith M.C."/>
            <person name="Maeda N."/>
            <person name="Oyama R."/>
            <person name="Ravasi T."/>
            <person name="Lenhard B."/>
            <person name="Wells C."/>
            <person name="Kodzius R."/>
            <person name="Shimokawa K."/>
            <person name="Bajic V.B."/>
            <person name="Brenner S.E."/>
            <person name="Batalov S."/>
            <person name="Forrest A.R."/>
            <person name="Zavolan M."/>
            <person name="Davis M.J."/>
            <person name="Wilming L.G."/>
            <person name="Aidinis V."/>
            <person name="Allen J.E."/>
            <person name="Ambesi-Impiombato A."/>
            <person name="Apweiler R."/>
            <person name="Aturaliya R.N."/>
            <person name="Bailey T.L."/>
            <person name="Bansal M."/>
            <person name="Baxter L."/>
            <person name="Beisel K.W."/>
            <person name="Bersano T."/>
            <person name="Bono H."/>
            <person name="Chalk A.M."/>
            <person name="Chiu K.P."/>
            <person name="Choudhary V."/>
            <person name="Christoffels A."/>
            <person name="Clutterbuck D.R."/>
            <person name="Crowe M.L."/>
            <person name="Dalla E."/>
            <person name="Dalrymple B.P."/>
            <person name="de Bono B."/>
            <person name="Della Gatta G."/>
            <person name="di Bernardo D."/>
            <person name="Down T."/>
            <person name="Engstrom P."/>
            <person name="Fagiolini M."/>
            <person name="Faulkner G."/>
            <person name="Fletcher C.F."/>
            <person name="Fukushima T."/>
            <person name="Furuno M."/>
            <person name="Futaki S."/>
            <person name="Gariboldi M."/>
            <person name="Georgii-Hemming P."/>
            <person name="Gingeras T.R."/>
            <person name="Gojobori T."/>
            <person name="Green R.E."/>
            <person name="Gustincich S."/>
            <person name="Harbers M."/>
            <person name="Hayashi Y."/>
            <person name="Hensch T.K."/>
            <person name="Hirokawa N."/>
            <person name="Hill D."/>
            <person name="Huminiecki L."/>
            <person name="Iacono M."/>
            <person name="Ikeo K."/>
            <person name="Iwama A."/>
            <person name="Ishikawa T."/>
            <person name="Jakt M."/>
            <person name="Kanapin A."/>
            <person name="Katoh M."/>
            <person name="Kawasawa Y."/>
            <person name="Kelso J."/>
            <person name="Kitamura H."/>
            <person name="Kitano H."/>
            <person name="Kollias G."/>
            <person name="Krishnan S.P."/>
            <person name="Kruger A."/>
            <person name="Kummerfeld S.K."/>
            <person name="Kurochkin I.V."/>
            <person name="Lareau L.F."/>
            <person name="Lazarevic D."/>
            <person name="Lipovich L."/>
            <person name="Liu J."/>
            <person name="Liuni S."/>
            <person name="McWilliam S."/>
            <person name="Madan Babu M."/>
            <person name="Madera M."/>
            <person name="Marchionni L."/>
            <person name="Matsuda H."/>
            <person name="Matsuzawa S."/>
            <person name="Miki H."/>
            <person name="Mignone F."/>
            <person name="Miyake S."/>
            <person name="Morris K."/>
            <person name="Mottagui-Tabar S."/>
            <person name="Mulder N."/>
            <person name="Nakano N."/>
            <person name="Nakauchi H."/>
            <person name="Ng P."/>
            <person name="Nilsson R."/>
            <person name="Nishiguchi S."/>
            <person name="Nishikawa S."/>
            <person name="Nori F."/>
            <person name="Ohara O."/>
            <person name="Okazaki Y."/>
            <person name="Orlando V."/>
            <person name="Pang K.C."/>
            <person name="Pavan W.J."/>
            <person name="Pavesi G."/>
            <person name="Pesole G."/>
            <person name="Petrovsky N."/>
            <person name="Piazza S."/>
            <person name="Reed J."/>
            <person name="Reid J.F."/>
            <person name="Ring B.Z."/>
            <person name="Ringwald M."/>
            <person name="Rost B."/>
            <person name="Ruan Y."/>
            <person name="Salzberg S.L."/>
            <person name="Sandelin A."/>
            <person name="Schneider C."/>
            <person name="Schoenbach C."/>
            <person name="Sekiguchi K."/>
            <person name="Semple C.A."/>
            <person name="Seno S."/>
            <person name="Sessa L."/>
            <person name="Sheng Y."/>
            <person name="Shibata Y."/>
            <person name="Shimada H."/>
            <person name="Shimada K."/>
            <person name="Silva D."/>
            <person name="Sinclair B."/>
            <person name="Sperling S."/>
            <person name="Stupka E."/>
            <person name="Sugiura K."/>
            <person name="Sultana R."/>
            <person name="Takenaka Y."/>
            <person name="Taki K."/>
            <person name="Tammoja K."/>
            <person name="Tan S.L."/>
            <person name="Tang S."/>
            <person name="Taylor M.S."/>
            <person name="Tegner J."/>
            <person name="Teichmann S.A."/>
            <person name="Ueda H.R."/>
            <person name="van Nimwegen E."/>
            <person name="Verardo R."/>
            <person name="Wei C.L."/>
            <person name="Yagi K."/>
            <person name="Yamanishi H."/>
            <person name="Zabarovsky E."/>
            <person name="Zhu S."/>
            <person name="Zimmer A."/>
            <person name="Hide W."/>
            <person name="Bult C."/>
            <person name="Grimmond S.M."/>
            <person name="Teasdale R.D."/>
            <person name="Liu E.T."/>
            <person name="Brusic V."/>
            <person name="Quackenbush J."/>
            <person name="Wahlestedt C."/>
            <person name="Mattick J.S."/>
            <person name="Hume D.A."/>
            <person name="Kai C."/>
            <person name="Sasaki D."/>
            <person name="Tomaru Y."/>
            <person name="Fukuda S."/>
            <person name="Kanamori-Katayama M."/>
            <person name="Suzuki M."/>
            <person name="Aoki J."/>
            <person name="Arakawa T."/>
            <person name="Iida J."/>
            <person name="Imamura K."/>
            <person name="Itoh M."/>
            <person name="Kato T."/>
            <person name="Kawaji H."/>
            <person name="Kawagashira N."/>
            <person name="Kawashima T."/>
            <person name="Kojima M."/>
            <person name="Kondo S."/>
            <person name="Konno H."/>
            <person name="Nakano K."/>
            <person name="Ninomiya N."/>
            <person name="Nishio T."/>
            <person name="Okada M."/>
            <person name="Plessy C."/>
            <person name="Shibata K."/>
            <person name="Shiraki T."/>
            <person name="Suzuki S."/>
            <person name="Tagami M."/>
            <person name="Waki K."/>
            <person name="Watahiki A."/>
            <person name="Okamura-Oho Y."/>
            <person name="Suzuki H."/>
            <person name="Kawai J."/>
            <person name="Hayashizaki Y."/>
        </authorList>
    </citation>
    <scope>NUCLEOTIDE SEQUENCE [LARGE SCALE MRNA] (ISOFORM 2)</scope>
    <source>
        <strain>C57BL/6J</strain>
        <tissue>Egg</tissue>
    </source>
</reference>
<reference key="2">
    <citation type="journal article" date="2009" name="PLoS Biol.">
        <title>Lineage-specific biology revealed by a finished genome assembly of the mouse.</title>
        <authorList>
            <person name="Church D.M."/>
            <person name="Goodstadt L."/>
            <person name="Hillier L.W."/>
            <person name="Zody M.C."/>
            <person name="Goldstein S."/>
            <person name="She X."/>
            <person name="Bult C.J."/>
            <person name="Agarwala R."/>
            <person name="Cherry J.L."/>
            <person name="DiCuccio M."/>
            <person name="Hlavina W."/>
            <person name="Kapustin Y."/>
            <person name="Meric P."/>
            <person name="Maglott D."/>
            <person name="Birtle Z."/>
            <person name="Marques A.C."/>
            <person name="Graves T."/>
            <person name="Zhou S."/>
            <person name="Teague B."/>
            <person name="Potamousis K."/>
            <person name="Churas C."/>
            <person name="Place M."/>
            <person name="Herschleb J."/>
            <person name="Runnheim R."/>
            <person name="Forrest D."/>
            <person name="Amos-Landgraf J."/>
            <person name="Schwartz D.C."/>
            <person name="Cheng Z."/>
            <person name="Lindblad-Toh K."/>
            <person name="Eichler E.E."/>
            <person name="Ponting C.P."/>
        </authorList>
    </citation>
    <scope>NUCLEOTIDE SEQUENCE [LARGE SCALE GENOMIC DNA]</scope>
    <source>
        <strain>C57BL/6J</strain>
    </source>
</reference>
<reference key="3">
    <citation type="journal article" date="2004" name="Genome Res.">
        <title>The status, quality, and expansion of the NIH full-length cDNA project: the Mammalian Gene Collection (MGC).</title>
        <authorList>
            <consortium name="The MGC Project Team"/>
        </authorList>
    </citation>
    <scope>NUCLEOTIDE SEQUENCE [LARGE SCALE MRNA] (ISOFORM 1)</scope>
    <source>
        <strain>C57BL/6J</strain>
        <tissue>Egg</tissue>
    </source>
</reference>
<organism>
    <name type="scientific">Mus musculus</name>
    <name type="common">Mouse</name>
    <dbReference type="NCBI Taxonomy" id="10090"/>
    <lineage>
        <taxon>Eukaryota</taxon>
        <taxon>Metazoa</taxon>
        <taxon>Chordata</taxon>
        <taxon>Craniata</taxon>
        <taxon>Vertebrata</taxon>
        <taxon>Euteleostomi</taxon>
        <taxon>Mammalia</taxon>
        <taxon>Eutheria</taxon>
        <taxon>Euarchontoglires</taxon>
        <taxon>Glires</taxon>
        <taxon>Rodentia</taxon>
        <taxon>Myomorpha</taxon>
        <taxon>Muroidea</taxon>
        <taxon>Muridae</taxon>
        <taxon>Murinae</taxon>
        <taxon>Mus</taxon>
        <taxon>Mus</taxon>
    </lineage>
</organism>
<evidence type="ECO:0000250" key="1"/>
<evidence type="ECO:0000255" key="2">
    <source>
        <dbReference type="PROSITE-ProRule" id="PRU00062"/>
    </source>
</evidence>
<evidence type="ECO:0000255" key="3">
    <source>
        <dbReference type="PROSITE-ProRule" id="PRU00145"/>
    </source>
</evidence>
<evidence type="ECO:0000303" key="4">
    <source>
    </source>
</evidence>
<evidence type="ECO:0000305" key="5"/>
<proteinExistence type="evidence at transcript level"/>
<dbReference type="EMBL" id="AK163287">
    <property type="protein sequence ID" value="BAE37276.1"/>
    <property type="molecule type" value="mRNA"/>
</dbReference>
<dbReference type="EMBL" id="AL732506">
    <property type="status" value="NOT_ANNOTATED_CDS"/>
    <property type="molecule type" value="Genomic_DNA"/>
</dbReference>
<dbReference type="EMBL" id="BC080700">
    <property type="protein sequence ID" value="AAH80700.1"/>
    <property type="molecule type" value="mRNA"/>
</dbReference>
<dbReference type="CCDS" id="CCDS18098.1">
    <molecule id="Q66JY6-1"/>
</dbReference>
<dbReference type="RefSeq" id="NP_001013395.2">
    <molecule id="Q66JY6-1"/>
    <property type="nucleotide sequence ID" value="NM_001013377.3"/>
</dbReference>
<dbReference type="RefSeq" id="XP_006537893.1">
    <property type="nucleotide sequence ID" value="XM_006537830.3"/>
</dbReference>
<dbReference type="SMR" id="Q66JY6"/>
<dbReference type="FunCoup" id="Q66JY6">
    <property type="interactions" value="975"/>
</dbReference>
<dbReference type="IntAct" id="Q66JY6">
    <property type="interactions" value="1"/>
</dbReference>
<dbReference type="STRING" id="10090.ENSMUSP00000055293"/>
<dbReference type="GlyGen" id="Q66JY6">
    <property type="glycosylation" value="1 site, 1 O-linked glycan (1 site)"/>
</dbReference>
<dbReference type="iPTMnet" id="Q66JY6"/>
<dbReference type="PhosphoSitePlus" id="Q66JY6"/>
<dbReference type="PaxDb" id="10090-ENSMUSP00000055293"/>
<dbReference type="PeptideAtlas" id="Q66JY6"/>
<dbReference type="ProteomicsDB" id="283260">
    <molecule id="Q66JY6-1"/>
</dbReference>
<dbReference type="Antibodypedia" id="25913">
    <property type="antibodies" value="82 antibodies from 17 providers"/>
</dbReference>
<dbReference type="Ensembl" id="ENSMUST00000054538.13">
    <molecule id="Q66JY6-1"/>
    <property type="protein sequence ID" value="ENSMUSP00000055293.7"/>
    <property type="gene ID" value="ENSMUSG00000051517.15"/>
</dbReference>
<dbReference type="GeneID" id="230098"/>
<dbReference type="KEGG" id="mmu:230098"/>
<dbReference type="UCSC" id="uc008spz.2">
    <molecule id="Q66JY6-1"/>
    <property type="organism name" value="mouse"/>
</dbReference>
<dbReference type="AGR" id="MGI:3036286"/>
<dbReference type="CTD" id="84904"/>
<dbReference type="MGI" id="MGI:3036286">
    <property type="gene designation" value="Arhgef39"/>
</dbReference>
<dbReference type="VEuPathDB" id="HostDB:ENSMUSG00000051517"/>
<dbReference type="eggNOG" id="ENOG502QTR5">
    <property type="taxonomic scope" value="Eukaryota"/>
</dbReference>
<dbReference type="GeneTree" id="ENSGT00440000033863"/>
<dbReference type="HOGENOM" id="CLU_052525_0_0_1"/>
<dbReference type="InParanoid" id="Q66JY6"/>
<dbReference type="OMA" id="LLMCTDQ"/>
<dbReference type="OrthoDB" id="660555at2759"/>
<dbReference type="PhylomeDB" id="Q66JY6"/>
<dbReference type="TreeFam" id="TF350447"/>
<dbReference type="Reactome" id="R-MMU-193648">
    <property type="pathway name" value="NRAGE signals death through JNK"/>
</dbReference>
<dbReference type="Reactome" id="R-MMU-416482">
    <property type="pathway name" value="G alpha (12/13) signalling events"/>
</dbReference>
<dbReference type="Reactome" id="R-MMU-9013149">
    <property type="pathway name" value="RAC1 GTPase cycle"/>
</dbReference>
<dbReference type="BioGRID-ORCS" id="230098">
    <property type="hits" value="4 hits in 81 CRISPR screens"/>
</dbReference>
<dbReference type="ChiTaRS" id="Arhgef39">
    <property type="organism name" value="mouse"/>
</dbReference>
<dbReference type="PRO" id="PR:Q66JY6"/>
<dbReference type="Proteomes" id="UP000000589">
    <property type="component" value="Chromosome 4"/>
</dbReference>
<dbReference type="RNAct" id="Q66JY6">
    <property type="molecule type" value="protein"/>
</dbReference>
<dbReference type="Bgee" id="ENSMUSG00000051517">
    <property type="expression patterns" value="Expressed in animal zygote and 142 other cell types or tissues"/>
</dbReference>
<dbReference type="ExpressionAtlas" id="Q66JY6">
    <property type="expression patterns" value="baseline and differential"/>
</dbReference>
<dbReference type="GO" id="GO:0005886">
    <property type="term" value="C:plasma membrane"/>
    <property type="evidence" value="ECO:0000250"/>
    <property type="project" value="UniProtKB"/>
</dbReference>
<dbReference type="GO" id="GO:0005085">
    <property type="term" value="F:guanyl-nucleotide exchange factor activity"/>
    <property type="evidence" value="ECO:0007669"/>
    <property type="project" value="UniProtKB-KW"/>
</dbReference>
<dbReference type="GO" id="GO:0030335">
    <property type="term" value="P:positive regulation of cell migration"/>
    <property type="evidence" value="ECO:0000250"/>
    <property type="project" value="UniProtKB"/>
</dbReference>
<dbReference type="FunFam" id="2.30.29.30:FF:000339">
    <property type="entry name" value="Rho guanine nucleotide exchange factor 39"/>
    <property type="match status" value="1"/>
</dbReference>
<dbReference type="FunFam" id="1.20.900.10:FF:000030">
    <property type="entry name" value="rho guanine nucleotide exchange factor 39"/>
    <property type="match status" value="1"/>
</dbReference>
<dbReference type="Gene3D" id="1.20.900.10">
    <property type="entry name" value="Dbl homology (DH) domain"/>
    <property type="match status" value="1"/>
</dbReference>
<dbReference type="Gene3D" id="2.30.29.30">
    <property type="entry name" value="Pleckstrin-homology domain (PH domain)/Phosphotyrosine-binding domain (PTB)"/>
    <property type="match status" value="1"/>
</dbReference>
<dbReference type="InterPro" id="IPR042987">
    <property type="entry name" value="ARHGEF39"/>
</dbReference>
<dbReference type="InterPro" id="IPR035899">
    <property type="entry name" value="DBL_dom_sf"/>
</dbReference>
<dbReference type="InterPro" id="IPR000219">
    <property type="entry name" value="DH_dom"/>
</dbReference>
<dbReference type="InterPro" id="IPR011993">
    <property type="entry name" value="PH-like_dom_sf"/>
</dbReference>
<dbReference type="InterPro" id="IPR001849">
    <property type="entry name" value="PH_domain"/>
</dbReference>
<dbReference type="PANTHER" id="PTHR47056">
    <property type="entry name" value="RHO GUANINE NUCLEOTIDE EXCHANGE FACTOR 39"/>
    <property type="match status" value="1"/>
</dbReference>
<dbReference type="PANTHER" id="PTHR47056:SF1">
    <property type="entry name" value="RHO GUANINE NUCLEOTIDE EXCHANGE FACTOR 39"/>
    <property type="match status" value="1"/>
</dbReference>
<dbReference type="Pfam" id="PF00621">
    <property type="entry name" value="RhoGEF"/>
    <property type="match status" value="1"/>
</dbReference>
<dbReference type="SMART" id="SM00233">
    <property type="entry name" value="PH"/>
    <property type="match status" value="1"/>
</dbReference>
<dbReference type="SMART" id="SM00325">
    <property type="entry name" value="RhoGEF"/>
    <property type="match status" value="1"/>
</dbReference>
<dbReference type="SUPFAM" id="SSF48065">
    <property type="entry name" value="DBL homology domain (DH-domain)"/>
    <property type="match status" value="1"/>
</dbReference>
<dbReference type="SUPFAM" id="SSF50729">
    <property type="entry name" value="PH domain-like"/>
    <property type="match status" value="1"/>
</dbReference>
<dbReference type="PROSITE" id="PS50010">
    <property type="entry name" value="DH_2"/>
    <property type="match status" value="1"/>
</dbReference>
<dbReference type="PROSITE" id="PS50003">
    <property type="entry name" value="PH_DOMAIN"/>
    <property type="match status" value="1"/>
</dbReference>
<protein>
    <recommendedName>
        <fullName>Rho guanine nucleotide exchange factor 39</fullName>
    </recommendedName>
</protein>
<keyword id="KW-0025">Alternative splicing</keyword>
<keyword id="KW-1003">Cell membrane</keyword>
<keyword id="KW-0344">Guanine-nucleotide releasing factor</keyword>
<keyword id="KW-0472">Membrane</keyword>
<keyword id="KW-1185">Reference proteome</keyword>
<comment type="function">
    <text evidence="1">Promotes cell proliferation.</text>
</comment>
<comment type="subcellular location">
    <subcellularLocation>
        <location evidence="1">Cell membrane</location>
    </subcellularLocation>
</comment>
<comment type="alternative products">
    <event type="alternative splicing"/>
    <isoform>
        <id>Q66JY6-1</id>
        <name>1</name>
        <sequence type="displayed"/>
    </isoform>
    <isoform>
        <id>Q66JY6-2</id>
        <name>2</name>
        <sequence type="described" ref="VSP_026287"/>
    </isoform>
</comment>
<sequence>MESSGSAACCPVLQQRARWERKRVCTARELLETERRYQEQLGLVATYFLRILKAKGTLRPPELQTLFGTWELIYAASLELLPYLEEGQWGLGLQGFCPHLELYAQFAANAERSQTTLQAQLKKNKRFRRFVKLQEGRPEFRGLQLQDLLPLPLQRLQQYENLVVALAENTVPNSPDYQQLTRAARLVSETAQKVHAIGQSQKNDQHLLRVQALLSGRKAKGLTSGRWFLRQGWLLVVPPTGEPRPRMFFLFSDVLLMAKPRPPLHLLKSGTFVCRALYPMSQCHLSRVFGHSGGPCGGLLSLSFPHEKLLLMSTDQEELSQWHHSLTLAIRSQKSSTHRSVTAT</sequence>
<feature type="chain" id="PRO_0000291865" description="Rho guanine nucleotide exchange factor 39">
    <location>
        <begin position="1"/>
        <end position="344"/>
    </location>
</feature>
<feature type="domain" description="DH" evidence="2">
    <location>
        <begin position="22"/>
        <end position="197"/>
    </location>
</feature>
<feature type="domain" description="PH" evidence="3">
    <location>
        <begin position="227"/>
        <end position="331"/>
    </location>
</feature>
<feature type="splice variant" id="VSP_026287" description="In isoform 2." evidence="4">
    <location>
        <begin position="1"/>
        <end position="246"/>
    </location>
</feature>
<feature type="sequence conflict" description="In Ref. 3; AAH80700." evidence="5" ref="3">
    <original>P</original>
    <variation>L</variation>
    <location>
        <position position="60"/>
    </location>
</feature>